<organism>
    <name type="scientific">Rhodobacter capsulatus (strain ATCC BAA-309 / NBRC 16581 / SB1003)</name>
    <dbReference type="NCBI Taxonomy" id="272942"/>
    <lineage>
        <taxon>Bacteria</taxon>
        <taxon>Pseudomonadati</taxon>
        <taxon>Pseudomonadota</taxon>
        <taxon>Alphaproteobacteria</taxon>
        <taxon>Rhodobacterales</taxon>
        <taxon>Rhodobacter group</taxon>
        <taxon>Rhodobacter</taxon>
    </lineage>
</organism>
<dbReference type="EMBL" id="L12050">
    <property type="protein sequence ID" value="AAA85464.1"/>
    <property type="molecule type" value="Genomic_DNA"/>
</dbReference>
<dbReference type="EMBL" id="CP001312">
    <property type="protein sequence ID" value="ADE83809.1"/>
    <property type="molecule type" value="Genomic_DNA"/>
</dbReference>
<dbReference type="RefSeq" id="WP_013065791.1">
    <property type="nucleotide sequence ID" value="NC_014034.1"/>
</dbReference>
<dbReference type="SMR" id="Q52720"/>
<dbReference type="STRING" id="272942.RCAP_rcc00044"/>
<dbReference type="GeneID" id="31489001"/>
<dbReference type="KEGG" id="rcp:RCAP_rcc00044"/>
<dbReference type="eggNOG" id="COG1999">
    <property type="taxonomic scope" value="Bacteria"/>
</dbReference>
<dbReference type="HOGENOM" id="CLU_050131_3_1_5"/>
<dbReference type="OrthoDB" id="9790194at2"/>
<dbReference type="Proteomes" id="UP000002361">
    <property type="component" value="Chromosome"/>
</dbReference>
<dbReference type="GO" id="GO:0046872">
    <property type="term" value="F:metal ion binding"/>
    <property type="evidence" value="ECO:0007669"/>
    <property type="project" value="UniProtKB-KW"/>
</dbReference>
<dbReference type="GO" id="GO:0015979">
    <property type="term" value="P:photosynthesis"/>
    <property type="evidence" value="ECO:0007669"/>
    <property type="project" value="UniProtKB-KW"/>
</dbReference>
<dbReference type="GO" id="GO:1904960">
    <property type="term" value="P:positive regulation of cytochrome-c oxidase activity"/>
    <property type="evidence" value="ECO:0000315"/>
    <property type="project" value="CACAO"/>
</dbReference>
<dbReference type="CDD" id="cd02968">
    <property type="entry name" value="SCO"/>
    <property type="match status" value="1"/>
</dbReference>
<dbReference type="FunFam" id="3.40.30.10:FF:000013">
    <property type="entry name" value="Blast:Protein SCO1 homolog, mitochondrial"/>
    <property type="match status" value="1"/>
</dbReference>
<dbReference type="Gene3D" id="3.40.30.10">
    <property type="entry name" value="Glutaredoxin"/>
    <property type="match status" value="1"/>
</dbReference>
<dbReference type="InterPro" id="IPR003782">
    <property type="entry name" value="SCO1/SenC"/>
</dbReference>
<dbReference type="InterPro" id="IPR036249">
    <property type="entry name" value="Thioredoxin-like_sf"/>
</dbReference>
<dbReference type="InterPro" id="IPR013766">
    <property type="entry name" value="Thioredoxin_domain"/>
</dbReference>
<dbReference type="PANTHER" id="PTHR12151">
    <property type="entry name" value="ELECTRON TRANSPORT PROTIN SCO1/SENC FAMILY MEMBER"/>
    <property type="match status" value="1"/>
</dbReference>
<dbReference type="PANTHER" id="PTHR12151:SF25">
    <property type="entry name" value="LINALOOL DEHYDRATASE_ISOMERASE DOMAIN-CONTAINING PROTEIN"/>
    <property type="match status" value="1"/>
</dbReference>
<dbReference type="Pfam" id="PF02630">
    <property type="entry name" value="SCO1-SenC"/>
    <property type="match status" value="1"/>
</dbReference>
<dbReference type="SUPFAM" id="SSF52833">
    <property type="entry name" value="Thioredoxin-like"/>
    <property type="match status" value="1"/>
</dbReference>
<dbReference type="PROSITE" id="PS51352">
    <property type="entry name" value="THIOREDOXIN_2"/>
    <property type="match status" value="1"/>
</dbReference>
<gene>
    <name type="primary">senC</name>
    <name type="ordered locus">RCAP_rcc00044</name>
</gene>
<sequence>MNVSSKTAALAATAAVVVVVGISAAVTLVPHETDRFAACRKGTGSASAQIGGPFTLISETGATVTDRDVITKPSLVYFGYSYCPDVCPIDSTRNAAAVDLLAERGHDVTPVFISVDAARDTPPVLTEFTDLMSPKMIGLTGTPEQIDAAVKAYRAYYLIRNPGDPATLVDHSTQTYLMDPKLGFLDFYDRDATPEMVADSVGCFLDALQTPGDTPAAGNGN</sequence>
<feature type="chain" id="PRO_0000173874" description="Protein SenC">
    <location>
        <begin position="1"/>
        <end position="221"/>
    </location>
</feature>
<feature type="domain" description="Thioredoxin" evidence="2">
    <location>
        <begin position="45"/>
        <end position="210"/>
    </location>
</feature>
<feature type="binding site" evidence="1">
    <location>
        <position position="83"/>
    </location>
    <ligand>
        <name>Cu cation</name>
        <dbReference type="ChEBI" id="CHEBI:23378"/>
    </ligand>
</feature>
<feature type="binding site" evidence="1">
    <location>
        <position position="87"/>
    </location>
    <ligand>
        <name>Cu cation</name>
        <dbReference type="ChEBI" id="CHEBI:23378"/>
    </ligand>
</feature>
<feature type="binding site" evidence="1">
    <location>
        <position position="171"/>
    </location>
    <ligand>
        <name>Cu cation</name>
        <dbReference type="ChEBI" id="CHEBI:23378"/>
    </ligand>
</feature>
<feature type="sequence conflict" description="In Ref. 1; AAA85464." evidence="3" ref="1">
    <location>
        <begin position="179"/>
        <end position="180"/>
    </location>
</feature>
<keyword id="KW-0186">Copper</keyword>
<keyword id="KW-0479">Metal-binding</keyword>
<keyword id="KW-0602">Photosynthesis</keyword>
<keyword id="KW-1185">Reference proteome</keyword>
<comment type="function">
    <text>Involved in both aerobic respiration and photosynthesis gene expression.</text>
</comment>
<comment type="similarity">
    <text evidence="3">Belongs to the SCO1/2 family.</text>
</comment>
<accession>Q52720</accession>
<accession>D5AKG7</accession>
<name>SENC_RHOCB</name>
<proteinExistence type="inferred from homology"/>
<evidence type="ECO:0000250" key="1"/>
<evidence type="ECO:0000255" key="2">
    <source>
        <dbReference type="PROSITE-ProRule" id="PRU00691"/>
    </source>
</evidence>
<evidence type="ECO:0000305" key="3"/>
<protein>
    <recommendedName>
        <fullName>Protein SenC</fullName>
    </recommendedName>
</protein>
<reference key="1">
    <citation type="journal article" date="1995" name="J. Bacteriol.">
        <title>Cloning and characterization of senC, a gene involved in both aerobic respiration and photosynthesis gene expression in Rhodobacter capsulatus.</title>
        <authorList>
            <person name="Buggy J."/>
            <person name="Bauer C.E."/>
        </authorList>
    </citation>
    <scope>NUCLEOTIDE SEQUENCE [GENOMIC DNA]</scope>
    <source>
        <strain>ATCC BAA-309 / NBRC 16581 / SB1003</strain>
    </source>
</reference>
<reference key="2">
    <citation type="journal article" date="2010" name="J. Bacteriol.">
        <title>Complete genome sequence of the photosynthetic purple nonsulfur bacterium Rhodobacter capsulatus SB 1003.</title>
        <authorList>
            <person name="Strnad H."/>
            <person name="Lapidus A."/>
            <person name="Paces J."/>
            <person name="Ulbrich P."/>
            <person name="Vlcek C."/>
            <person name="Paces V."/>
            <person name="Haselkorn R."/>
        </authorList>
    </citation>
    <scope>NUCLEOTIDE SEQUENCE [LARGE SCALE GENOMIC DNA]</scope>
    <source>
        <strain>ATCC BAA-309 / NBRC 16581 / SB1003</strain>
    </source>
</reference>